<dbReference type="EC" id="3.1.21.10" evidence="1"/>
<dbReference type="EMBL" id="CP000114">
    <property type="protein sequence ID" value="ABA45918.1"/>
    <property type="molecule type" value="Genomic_DNA"/>
</dbReference>
<dbReference type="RefSeq" id="WP_000248792.1">
    <property type="nucleotide sequence ID" value="NC_007432.1"/>
</dbReference>
<dbReference type="SMR" id="Q3K380"/>
<dbReference type="GeneID" id="66885272"/>
<dbReference type="KEGG" id="sak:SAK_0371"/>
<dbReference type="HOGENOM" id="CLU_096340_0_0_9"/>
<dbReference type="GO" id="GO:0005737">
    <property type="term" value="C:cytoplasm"/>
    <property type="evidence" value="ECO:0007669"/>
    <property type="project" value="UniProtKB-SubCell"/>
</dbReference>
<dbReference type="GO" id="GO:0004519">
    <property type="term" value="F:endonuclease activity"/>
    <property type="evidence" value="ECO:0007669"/>
    <property type="project" value="UniProtKB-UniRule"/>
</dbReference>
<dbReference type="GO" id="GO:0000287">
    <property type="term" value="F:magnesium ion binding"/>
    <property type="evidence" value="ECO:0007669"/>
    <property type="project" value="UniProtKB-UniRule"/>
</dbReference>
<dbReference type="GO" id="GO:0003676">
    <property type="term" value="F:nucleic acid binding"/>
    <property type="evidence" value="ECO:0007669"/>
    <property type="project" value="InterPro"/>
</dbReference>
<dbReference type="GO" id="GO:0007059">
    <property type="term" value="P:chromosome segregation"/>
    <property type="evidence" value="ECO:0007669"/>
    <property type="project" value="UniProtKB-UniRule"/>
</dbReference>
<dbReference type="GO" id="GO:0006310">
    <property type="term" value="P:DNA recombination"/>
    <property type="evidence" value="ECO:0007669"/>
    <property type="project" value="UniProtKB-UniRule"/>
</dbReference>
<dbReference type="GO" id="GO:0006281">
    <property type="term" value="P:DNA repair"/>
    <property type="evidence" value="ECO:0007669"/>
    <property type="project" value="UniProtKB-UniRule"/>
</dbReference>
<dbReference type="CDD" id="cd22354">
    <property type="entry name" value="RecU-like"/>
    <property type="match status" value="1"/>
</dbReference>
<dbReference type="Gene3D" id="3.40.1350.10">
    <property type="match status" value="1"/>
</dbReference>
<dbReference type="HAMAP" id="MF_00130">
    <property type="entry name" value="RecU"/>
    <property type="match status" value="1"/>
</dbReference>
<dbReference type="InterPro" id="IPR004612">
    <property type="entry name" value="Resolv_RecU"/>
</dbReference>
<dbReference type="InterPro" id="IPR011335">
    <property type="entry name" value="Restrct_endonuc-II-like"/>
</dbReference>
<dbReference type="InterPro" id="IPR011856">
    <property type="entry name" value="tRNA_endonuc-like_dom_sf"/>
</dbReference>
<dbReference type="NCBIfam" id="NF002580">
    <property type="entry name" value="PRK02234.1-1"/>
    <property type="match status" value="1"/>
</dbReference>
<dbReference type="NCBIfam" id="NF002584">
    <property type="entry name" value="PRK02234.1-5"/>
    <property type="match status" value="1"/>
</dbReference>
<dbReference type="NCBIfam" id="TIGR00648">
    <property type="entry name" value="recU"/>
    <property type="match status" value="1"/>
</dbReference>
<dbReference type="Pfam" id="PF03838">
    <property type="entry name" value="RecU"/>
    <property type="match status" value="1"/>
</dbReference>
<dbReference type="PIRSF" id="PIRSF037785">
    <property type="entry name" value="RecU"/>
    <property type="match status" value="1"/>
</dbReference>
<dbReference type="SUPFAM" id="SSF52980">
    <property type="entry name" value="Restriction endonuclease-like"/>
    <property type="match status" value="1"/>
</dbReference>
<keyword id="KW-0963">Cytoplasm</keyword>
<keyword id="KW-0227">DNA damage</keyword>
<keyword id="KW-0233">DNA recombination</keyword>
<keyword id="KW-0234">DNA repair</keyword>
<keyword id="KW-0255">Endonuclease</keyword>
<keyword id="KW-0378">Hydrolase</keyword>
<keyword id="KW-0460">Magnesium</keyword>
<keyword id="KW-0479">Metal-binding</keyword>
<keyword id="KW-0540">Nuclease</keyword>
<evidence type="ECO:0000255" key="1">
    <source>
        <dbReference type="HAMAP-Rule" id="MF_00130"/>
    </source>
</evidence>
<feature type="chain" id="PRO_1000016743" description="Holliday junction resolvase RecU">
    <location>
        <begin position="1"/>
        <end position="199"/>
    </location>
</feature>
<feature type="binding site" evidence="1">
    <location>
        <position position="82"/>
    </location>
    <ligand>
        <name>Mg(2+)</name>
        <dbReference type="ChEBI" id="CHEBI:18420"/>
    </ligand>
</feature>
<feature type="binding site" evidence="1">
    <location>
        <position position="84"/>
    </location>
    <ligand>
        <name>Mg(2+)</name>
        <dbReference type="ChEBI" id="CHEBI:18420"/>
    </ligand>
</feature>
<feature type="binding site" evidence="1">
    <location>
        <position position="97"/>
    </location>
    <ligand>
        <name>Mg(2+)</name>
        <dbReference type="ChEBI" id="CHEBI:18420"/>
    </ligand>
</feature>
<feature type="binding site" evidence="1">
    <location>
        <position position="116"/>
    </location>
    <ligand>
        <name>Mg(2+)</name>
        <dbReference type="ChEBI" id="CHEBI:18420"/>
    </ligand>
</feature>
<feature type="site" description="Transition state stabilizer" evidence="1">
    <location>
        <position position="99"/>
    </location>
</feature>
<comment type="function">
    <text evidence="1">Endonuclease that resolves Holliday junction intermediates in genetic recombination. Cleaves mobile four-strand junctions by introducing symmetrical nicks in paired strands. Promotes annealing of linear ssDNA with homologous dsDNA. Required for DNA repair, homologous recombination and chromosome segregation.</text>
</comment>
<comment type="catalytic activity">
    <reaction evidence="1">
        <text>Endonucleolytic cleavage at a junction such as a reciprocal single-stranded crossover between two homologous DNA duplexes (Holliday junction).</text>
        <dbReference type="EC" id="3.1.21.10"/>
    </reaction>
</comment>
<comment type="cofactor">
    <cofactor evidence="1">
        <name>Mg(2+)</name>
        <dbReference type="ChEBI" id="CHEBI:18420"/>
    </cofactor>
    <text evidence="1">Binds 1 Mg(2+) ion per subunit.</text>
</comment>
<comment type="subcellular location">
    <subcellularLocation>
        <location evidence="1">Cytoplasm</location>
    </subcellularLocation>
</comment>
<comment type="similarity">
    <text evidence="1">Belongs to the RecU family.</text>
</comment>
<accession>Q3K380</accession>
<proteinExistence type="inferred from homology"/>
<organism>
    <name type="scientific">Streptococcus agalactiae serotype Ia (strain ATCC 27591 / A909 / CDC SS700)</name>
    <dbReference type="NCBI Taxonomy" id="205921"/>
    <lineage>
        <taxon>Bacteria</taxon>
        <taxon>Bacillati</taxon>
        <taxon>Bacillota</taxon>
        <taxon>Bacilli</taxon>
        <taxon>Lactobacillales</taxon>
        <taxon>Streptococcaceae</taxon>
        <taxon>Streptococcus</taxon>
    </lineage>
</organism>
<reference key="1">
    <citation type="journal article" date="2005" name="Proc. Natl. Acad. Sci. U.S.A.">
        <title>Genome analysis of multiple pathogenic isolates of Streptococcus agalactiae: implications for the microbial 'pan-genome'.</title>
        <authorList>
            <person name="Tettelin H."/>
            <person name="Masignani V."/>
            <person name="Cieslewicz M.J."/>
            <person name="Donati C."/>
            <person name="Medini D."/>
            <person name="Ward N.L."/>
            <person name="Angiuoli S.V."/>
            <person name="Crabtree J."/>
            <person name="Jones A.L."/>
            <person name="Durkin A.S."/>
            <person name="DeBoy R.T."/>
            <person name="Davidsen T.M."/>
            <person name="Mora M."/>
            <person name="Scarselli M."/>
            <person name="Margarit y Ros I."/>
            <person name="Peterson J.D."/>
            <person name="Hauser C.R."/>
            <person name="Sundaram J.P."/>
            <person name="Nelson W.C."/>
            <person name="Madupu R."/>
            <person name="Brinkac L.M."/>
            <person name="Dodson R.J."/>
            <person name="Rosovitz M.J."/>
            <person name="Sullivan S.A."/>
            <person name="Daugherty S.C."/>
            <person name="Haft D.H."/>
            <person name="Selengut J."/>
            <person name="Gwinn M.L."/>
            <person name="Zhou L."/>
            <person name="Zafar N."/>
            <person name="Khouri H."/>
            <person name="Radune D."/>
            <person name="Dimitrov G."/>
            <person name="Watkins K."/>
            <person name="O'Connor K.J."/>
            <person name="Smith S."/>
            <person name="Utterback T.R."/>
            <person name="White O."/>
            <person name="Rubens C.E."/>
            <person name="Grandi G."/>
            <person name="Madoff L.C."/>
            <person name="Kasper D.L."/>
            <person name="Telford J.L."/>
            <person name="Wessels M.R."/>
            <person name="Rappuoli R."/>
            <person name="Fraser C.M."/>
        </authorList>
    </citation>
    <scope>NUCLEOTIDE SEQUENCE [LARGE SCALE GENOMIC DNA]</scope>
    <source>
        <strain>ATCC 27591 / A909 / CDC SS700</strain>
    </source>
</reference>
<name>RECU_STRA1</name>
<protein>
    <recommendedName>
        <fullName evidence="1">Holliday junction resolvase RecU</fullName>
        <ecNumber evidence="1">3.1.21.10</ecNumber>
    </recommendedName>
    <alternativeName>
        <fullName evidence="1">Recombination protein U homolog</fullName>
    </alternativeName>
</protein>
<sequence>MVNYPHQLIRKTTVTKSKKKKIDFANRGMSFEAAINATNDYYLSHELAVIHKKPTPVQIVKVDYPKRSRAKIVEAYFRQASTTDYSGVYKGYYIDFEAKETRQKTAMPMKNFHAHQIEHMANVLQQKGICFVLLHFSTLKETYLLPANELISFYQIDKGNKSMPIDYIRKNGFFVKESAFPQVPYLDIIEEKLLGGDYN</sequence>
<gene>
    <name evidence="1" type="primary">recU</name>
    <name type="ordered locus">SAK_0371</name>
</gene>